<proteinExistence type="evidence at protein level"/>
<feature type="signal peptide" evidence="4">
    <location>
        <begin position="1" status="less than"/>
        <end position="4"/>
    </location>
</feature>
<feature type="chain" id="PRO_5000337460" description="Phospholipase A2 inhibitor BjussuMIP">
    <location>
        <begin position="5"/>
        <end position="151"/>
    </location>
</feature>
<feature type="domain" description="C-type lectin" evidence="3">
    <location>
        <begin position="31"/>
        <end position="146"/>
    </location>
</feature>
<feature type="glycosylation site" description="N-linked (GlcNAc...) asparagine" evidence="2">
    <location>
        <position position="107"/>
    </location>
</feature>
<feature type="disulfide bond" evidence="1">
    <location>
        <begin position="68"/>
        <end position="145"/>
    </location>
</feature>
<feature type="disulfide bond" evidence="1">
    <location>
        <begin position="123"/>
        <end position="137"/>
    </location>
</feature>
<feature type="non-terminal residue">
    <location>
        <position position="1"/>
    </location>
</feature>
<protein>
    <recommendedName>
        <fullName>Phospholipase A2 inhibitor BjussuMIP</fullName>
        <shortName>alpha-PLI</shortName>
    </recommendedName>
</protein>
<keyword id="KW-0106">Calcium</keyword>
<keyword id="KW-0903">Direct protein sequencing</keyword>
<keyword id="KW-1015">Disulfide bond</keyword>
<keyword id="KW-0325">Glycoprotein</keyword>
<keyword id="KW-0430">Lectin</keyword>
<keyword id="KW-0593">Phospholipase A2 inhibitor</keyword>
<keyword id="KW-0964">Secreted</keyword>
<keyword id="KW-0732">Signal</keyword>
<comment type="function">
    <text evidence="4">Inhibits enzymatic, anticoagulant, edema formation, myotoxicity activities induced by snakes phospholipase A2. Is oligomeric, but it is probable that each of its subunits can bind and inactive a PLA2 molecule.</text>
</comment>
<comment type="subunit">
    <text evidence="4">Oligomer.</text>
</comment>
<comment type="subcellular location">
    <subcellularLocation>
        <location evidence="4">Secreted</location>
    </subcellularLocation>
    <text evidence="4">Secreted in plasma.</text>
</comment>
<comment type="tissue specificity">
    <text>Expressed by the liver.</text>
</comment>
<comment type="similarity">
    <text evidence="5">Belongs to the alpha-type phospholipase A2 inhibitor family.</text>
</comment>
<dbReference type="EMBL" id="EU574627">
    <property type="protein sequence ID" value="ACB70224.1"/>
    <property type="molecule type" value="mRNA"/>
</dbReference>
<dbReference type="SMR" id="B2D1Y0"/>
<dbReference type="GO" id="GO:0005576">
    <property type="term" value="C:extracellular region"/>
    <property type="evidence" value="ECO:0007669"/>
    <property type="project" value="UniProtKB-SubCell"/>
</dbReference>
<dbReference type="GO" id="GO:0030246">
    <property type="term" value="F:carbohydrate binding"/>
    <property type="evidence" value="ECO:0007669"/>
    <property type="project" value="UniProtKB-KW"/>
</dbReference>
<dbReference type="GO" id="GO:0019834">
    <property type="term" value="F:phospholipase A2 inhibitor activity"/>
    <property type="evidence" value="ECO:0007669"/>
    <property type="project" value="UniProtKB-KW"/>
</dbReference>
<dbReference type="Gene3D" id="3.10.100.10">
    <property type="entry name" value="Mannose-Binding Protein A, subunit A"/>
    <property type="match status" value="1"/>
</dbReference>
<dbReference type="InterPro" id="IPR001304">
    <property type="entry name" value="C-type_lectin-like"/>
</dbReference>
<dbReference type="InterPro" id="IPR016186">
    <property type="entry name" value="C-type_lectin-like/link_sf"/>
</dbReference>
<dbReference type="InterPro" id="IPR018378">
    <property type="entry name" value="C-type_lectin_CS"/>
</dbReference>
<dbReference type="InterPro" id="IPR016187">
    <property type="entry name" value="CTDL_fold"/>
</dbReference>
<dbReference type="Pfam" id="PF00059">
    <property type="entry name" value="Lectin_C"/>
    <property type="match status" value="1"/>
</dbReference>
<dbReference type="SUPFAM" id="SSF56436">
    <property type="entry name" value="C-type lectin-like"/>
    <property type="match status" value="1"/>
</dbReference>
<dbReference type="PROSITE" id="PS00615">
    <property type="entry name" value="C_TYPE_LECTIN_1"/>
    <property type="match status" value="1"/>
</dbReference>
<dbReference type="PROSITE" id="PS50041">
    <property type="entry name" value="C_TYPE_LECTIN_2"/>
    <property type="match status" value="1"/>
</dbReference>
<organism>
    <name type="scientific">Bothrops jararacussu</name>
    <name type="common">Jararacussu</name>
    <dbReference type="NCBI Taxonomy" id="8726"/>
    <lineage>
        <taxon>Eukaryota</taxon>
        <taxon>Metazoa</taxon>
        <taxon>Chordata</taxon>
        <taxon>Craniata</taxon>
        <taxon>Vertebrata</taxon>
        <taxon>Euteleostomi</taxon>
        <taxon>Lepidosauria</taxon>
        <taxon>Squamata</taxon>
        <taxon>Bifurcata</taxon>
        <taxon>Unidentata</taxon>
        <taxon>Episquamata</taxon>
        <taxon>Toxicofera</taxon>
        <taxon>Serpentes</taxon>
        <taxon>Colubroidea</taxon>
        <taxon>Viperidae</taxon>
        <taxon>Crotalinae</taxon>
        <taxon>Bothrops</taxon>
    </lineage>
</organism>
<evidence type="ECO:0000250" key="1">
    <source>
        <dbReference type="UniProtKB" id="P21755"/>
    </source>
</evidence>
<evidence type="ECO:0000255" key="2"/>
<evidence type="ECO:0000255" key="3">
    <source>
        <dbReference type="PROSITE-ProRule" id="PRU00040"/>
    </source>
</evidence>
<evidence type="ECO:0000269" key="4">
    <source>
    </source>
</evidence>
<evidence type="ECO:0000305" key="5"/>
<accession>B2D1Y0</accession>
<sequence length="151" mass="16621">LANGDEVDPDGHVLNSLIETVMRLQREFANLKYAFLTVHKARSFGSGSERLYVTNKEVKNFEPLGEICSQAGGRIPSPQLENQNKAFASVLERHNKAAYLVVGDSANFTNWAAGEPNEADGTCVKADTHGSWHSASCDENLLVVCEFYFIL</sequence>
<reference key="1">
    <citation type="journal article" date="2008" name="Biochimie">
        <title>An alpha-type phospholipase A(2) inhibitor from Bothrops jararacussu snake plasma: structural and functional characterization.</title>
        <authorList>
            <person name="Oliveira C.Z."/>
            <person name="Menaldo D.L."/>
            <person name="Marcussi S."/>
            <person name="Santos-Filho N.A."/>
            <person name="Silveira L.B."/>
            <person name="Boldrini-Franca J."/>
            <person name="Rodrigues V.M."/>
            <person name="Soares A.M."/>
        </authorList>
    </citation>
    <scope>NUCLEOTIDE SEQUENCE [MRNA]</scope>
    <scope>PROTEIN SEQUENCE OF 5-25; 27-40; 51-74 AND 86-93</scope>
    <scope>IDENTIFICATION BY MASS SPECTROMETRY</scope>
    <scope>FUNCTION</scope>
    <scope>SUBUNIT</scope>
    <scope>GLYCOSYLATION</scope>
    <scope>SUBCELLULAR LOCATION</scope>
    <source>
        <tissue>Liver</tissue>
        <tissue>Plasma</tissue>
    </source>
</reference>
<name>PLIA_BOTJR</name>